<comment type="function">
    <text evidence="1">Ligates lysine onto the cytidine present at position 34 of the AUA codon-specific tRNA(Ile) that contains the anticodon CAU, in an ATP-dependent manner. Cytidine is converted to lysidine, thus changing the amino acid specificity of the tRNA from methionine to isoleucine.</text>
</comment>
<comment type="catalytic activity">
    <reaction evidence="1">
        <text>cytidine(34) in tRNA(Ile2) + L-lysine + ATP = lysidine(34) in tRNA(Ile2) + AMP + diphosphate + H(+)</text>
        <dbReference type="Rhea" id="RHEA:43744"/>
        <dbReference type="Rhea" id="RHEA-COMP:10625"/>
        <dbReference type="Rhea" id="RHEA-COMP:10670"/>
        <dbReference type="ChEBI" id="CHEBI:15378"/>
        <dbReference type="ChEBI" id="CHEBI:30616"/>
        <dbReference type="ChEBI" id="CHEBI:32551"/>
        <dbReference type="ChEBI" id="CHEBI:33019"/>
        <dbReference type="ChEBI" id="CHEBI:82748"/>
        <dbReference type="ChEBI" id="CHEBI:83665"/>
        <dbReference type="ChEBI" id="CHEBI:456215"/>
        <dbReference type="EC" id="6.3.4.19"/>
    </reaction>
</comment>
<comment type="subcellular location">
    <subcellularLocation>
        <location evidence="1">Cytoplasm</location>
    </subcellularLocation>
</comment>
<comment type="domain">
    <text>The N-terminal region contains the highly conserved SGGXDS motif, predicted to be a P-loop motif involved in ATP binding.</text>
</comment>
<comment type="similarity">
    <text evidence="1">Belongs to the tRNA(Ile)-lysidine synthase family.</text>
</comment>
<sequence length="432" mass="51260">MNIKTDGWSKKAHIVVAVSTGIDSMSLLYSLLNDYQHTYRKLTCVHVNHGLREQSYEEEAFLREYCHQHHIDIYIKRLDLSDIVADGNSIQQEARQRRYEWFGDIIAQLRADVLLTAHHLDDQFETIIYRLFTGRSTRNSLGMTYESYFNQYKVYRPMLNLKKTEILAYQYANQIPYYEDMSNQDRKYVRNDIRQRIIPAINENPHLNAHQLLKLKDWHDIELQSLKEQAETFINNEVSKSKYLTYSFSRTAFNELNVNIKSVVMDLLFEKLDCHLAMPQHAYDEWFEQIRNDKSQFNIHVTDEWIIQIAYDKLIIMAKSEMDQYILDRICIRKPGTYEFNDYQIDIHPDLPQQLYPLTVRVRQNGDVYKLNGQKGHKKVSRLFIDKKVTLAERQRIPLIINQENAVLAIGDLYVKENFKEFILISNNGDEL</sequence>
<organism>
    <name type="scientific">Staphylococcus epidermidis (strain ATCC 12228 / FDA PCI 1200)</name>
    <dbReference type="NCBI Taxonomy" id="176280"/>
    <lineage>
        <taxon>Bacteria</taxon>
        <taxon>Bacillati</taxon>
        <taxon>Bacillota</taxon>
        <taxon>Bacilli</taxon>
        <taxon>Bacillales</taxon>
        <taxon>Staphylococcaceae</taxon>
        <taxon>Staphylococcus</taxon>
    </lineage>
</organism>
<keyword id="KW-0067">ATP-binding</keyword>
<keyword id="KW-0963">Cytoplasm</keyword>
<keyword id="KW-0436">Ligase</keyword>
<keyword id="KW-0547">Nucleotide-binding</keyword>
<keyword id="KW-0819">tRNA processing</keyword>
<name>TILS_STAES</name>
<reference key="1">
    <citation type="journal article" date="2003" name="Mol. Microbiol.">
        <title>Genome-based analysis of virulence genes in a non-biofilm-forming Staphylococcus epidermidis strain (ATCC 12228).</title>
        <authorList>
            <person name="Zhang Y.-Q."/>
            <person name="Ren S.-X."/>
            <person name="Li H.-L."/>
            <person name="Wang Y.-X."/>
            <person name="Fu G."/>
            <person name="Yang J."/>
            <person name="Qin Z.-Q."/>
            <person name="Miao Y.-G."/>
            <person name="Wang W.-Y."/>
            <person name="Chen R.-S."/>
            <person name="Shen Y."/>
            <person name="Chen Z."/>
            <person name="Yuan Z.-H."/>
            <person name="Zhao G.-P."/>
            <person name="Qu D."/>
            <person name="Danchin A."/>
            <person name="Wen Y.-M."/>
        </authorList>
    </citation>
    <scope>NUCLEOTIDE SEQUENCE [LARGE SCALE GENOMIC DNA]</scope>
    <source>
        <strain>ATCC 12228 / FDA PCI 1200</strain>
    </source>
</reference>
<evidence type="ECO:0000255" key="1">
    <source>
        <dbReference type="HAMAP-Rule" id="MF_01161"/>
    </source>
</evidence>
<dbReference type="EC" id="6.3.4.19" evidence="1"/>
<dbReference type="EMBL" id="AE015929">
    <property type="protein sequence ID" value="AAO05916.1"/>
    <property type="molecule type" value="Genomic_DNA"/>
</dbReference>
<dbReference type="RefSeq" id="NP_765829.1">
    <property type="nucleotide sequence ID" value="NC_004461.1"/>
</dbReference>
<dbReference type="RefSeq" id="WP_002447894.1">
    <property type="nucleotide sequence ID" value="NZ_WBME01000023.1"/>
</dbReference>
<dbReference type="SMR" id="Q8CQV3"/>
<dbReference type="GeneID" id="50019580"/>
<dbReference type="KEGG" id="sep:SE_2274"/>
<dbReference type="PATRIC" id="fig|176280.10.peg.2217"/>
<dbReference type="eggNOG" id="COG0037">
    <property type="taxonomic scope" value="Bacteria"/>
</dbReference>
<dbReference type="HOGENOM" id="CLU_018869_0_2_9"/>
<dbReference type="OrthoDB" id="9807403at2"/>
<dbReference type="Proteomes" id="UP000001411">
    <property type="component" value="Chromosome"/>
</dbReference>
<dbReference type="GO" id="GO:0005737">
    <property type="term" value="C:cytoplasm"/>
    <property type="evidence" value="ECO:0007669"/>
    <property type="project" value="UniProtKB-SubCell"/>
</dbReference>
<dbReference type="GO" id="GO:0005524">
    <property type="term" value="F:ATP binding"/>
    <property type="evidence" value="ECO:0007669"/>
    <property type="project" value="UniProtKB-KW"/>
</dbReference>
<dbReference type="GO" id="GO:0032267">
    <property type="term" value="F:tRNA(Ile)-lysidine synthase activity"/>
    <property type="evidence" value="ECO:0007669"/>
    <property type="project" value="UniProtKB-EC"/>
</dbReference>
<dbReference type="GO" id="GO:0006400">
    <property type="term" value="P:tRNA modification"/>
    <property type="evidence" value="ECO:0007669"/>
    <property type="project" value="UniProtKB-UniRule"/>
</dbReference>
<dbReference type="CDD" id="cd01992">
    <property type="entry name" value="TilS_N"/>
    <property type="match status" value="1"/>
</dbReference>
<dbReference type="Gene3D" id="3.40.50.620">
    <property type="entry name" value="HUPs"/>
    <property type="match status" value="1"/>
</dbReference>
<dbReference type="HAMAP" id="MF_01161">
    <property type="entry name" value="tRNA_Ile_lys_synt"/>
    <property type="match status" value="1"/>
</dbReference>
<dbReference type="InterPro" id="IPR012796">
    <property type="entry name" value="Lysidine-tRNA-synth_C"/>
</dbReference>
<dbReference type="InterPro" id="IPR014729">
    <property type="entry name" value="Rossmann-like_a/b/a_fold"/>
</dbReference>
<dbReference type="InterPro" id="IPR011063">
    <property type="entry name" value="TilS/TtcA_N"/>
</dbReference>
<dbReference type="InterPro" id="IPR012094">
    <property type="entry name" value="tRNA_Ile_lys_synt"/>
</dbReference>
<dbReference type="InterPro" id="IPR012795">
    <property type="entry name" value="tRNA_Ile_lys_synt_N"/>
</dbReference>
<dbReference type="NCBIfam" id="TIGR02433">
    <property type="entry name" value="lysidine_TilS_C"/>
    <property type="match status" value="1"/>
</dbReference>
<dbReference type="NCBIfam" id="TIGR02432">
    <property type="entry name" value="lysidine_TilS_N"/>
    <property type="match status" value="1"/>
</dbReference>
<dbReference type="PANTHER" id="PTHR43033">
    <property type="entry name" value="TRNA(ILE)-LYSIDINE SYNTHASE-RELATED"/>
    <property type="match status" value="1"/>
</dbReference>
<dbReference type="PANTHER" id="PTHR43033:SF1">
    <property type="entry name" value="TRNA(ILE)-LYSIDINE SYNTHASE-RELATED"/>
    <property type="match status" value="1"/>
</dbReference>
<dbReference type="Pfam" id="PF01171">
    <property type="entry name" value="ATP_bind_3"/>
    <property type="match status" value="1"/>
</dbReference>
<dbReference type="Pfam" id="PF11734">
    <property type="entry name" value="TilS_C"/>
    <property type="match status" value="1"/>
</dbReference>
<dbReference type="SMART" id="SM00977">
    <property type="entry name" value="TilS_C"/>
    <property type="match status" value="1"/>
</dbReference>
<dbReference type="SUPFAM" id="SSF52402">
    <property type="entry name" value="Adenine nucleotide alpha hydrolases-like"/>
    <property type="match status" value="1"/>
</dbReference>
<dbReference type="SUPFAM" id="SSF56037">
    <property type="entry name" value="PheT/TilS domain"/>
    <property type="match status" value="1"/>
</dbReference>
<feature type="chain" id="PRO_0000181771" description="tRNA(Ile)-lysidine synthase">
    <location>
        <begin position="1"/>
        <end position="432"/>
    </location>
</feature>
<feature type="binding site" evidence="1">
    <location>
        <begin position="19"/>
        <end position="24"/>
    </location>
    <ligand>
        <name>ATP</name>
        <dbReference type="ChEBI" id="CHEBI:30616"/>
    </ligand>
</feature>
<proteinExistence type="inferred from homology"/>
<accession>Q8CQV3</accession>
<gene>
    <name evidence="1" type="primary">tilS</name>
    <name type="ordered locus">SE_2274</name>
</gene>
<protein>
    <recommendedName>
        <fullName evidence="1">tRNA(Ile)-lysidine synthase</fullName>
        <ecNumber evidence="1">6.3.4.19</ecNumber>
    </recommendedName>
    <alternativeName>
        <fullName evidence="1">tRNA(Ile)-2-lysyl-cytidine synthase</fullName>
    </alternativeName>
    <alternativeName>
        <fullName evidence="1">tRNA(Ile)-lysidine synthetase</fullName>
    </alternativeName>
</protein>